<feature type="chain" id="PRO_0000047289" description="Zinc finger protein 28 homolog">
    <location>
        <begin position="1"/>
        <end position="868"/>
    </location>
</feature>
<feature type="domain" description="KRAB 1" evidence="2">
    <location>
        <begin position="103"/>
        <end position="174"/>
    </location>
</feature>
<feature type="domain" description="KRAB 2" evidence="2">
    <location>
        <begin position="232"/>
        <end position="299"/>
    </location>
</feature>
<feature type="zinc finger region" description="C2H2-type 1" evidence="1">
    <location>
        <begin position="420"/>
        <end position="442"/>
    </location>
</feature>
<feature type="zinc finger region" description="C2H2-type 2" evidence="1">
    <location>
        <begin position="448"/>
        <end position="470"/>
    </location>
</feature>
<feature type="zinc finger region" description="C2H2-type 3" evidence="1">
    <location>
        <begin position="476"/>
        <end position="499"/>
    </location>
</feature>
<feature type="zinc finger region" description="C2H2-type 4" evidence="1">
    <location>
        <begin position="505"/>
        <end position="527"/>
    </location>
</feature>
<feature type="zinc finger region" description="C2H2-type 5" evidence="1">
    <location>
        <begin position="533"/>
        <end position="555"/>
    </location>
</feature>
<feature type="zinc finger region" description="C2H2-type 6" evidence="1">
    <location>
        <begin position="561"/>
        <end position="583"/>
    </location>
</feature>
<feature type="zinc finger region" description="C2H2-type 7" evidence="1">
    <location>
        <begin position="589"/>
        <end position="611"/>
    </location>
</feature>
<feature type="zinc finger region" description="C2H2-type 8" evidence="1">
    <location>
        <begin position="617"/>
        <end position="639"/>
    </location>
</feature>
<feature type="zinc finger region" description="C2H2-type 9" evidence="1">
    <location>
        <begin position="645"/>
        <end position="667"/>
    </location>
</feature>
<feature type="zinc finger region" description="C2H2-type 10" evidence="1">
    <location>
        <begin position="673"/>
        <end position="695"/>
    </location>
</feature>
<feature type="zinc finger region" description="C2H2-type 11" evidence="1">
    <location>
        <begin position="701"/>
        <end position="723"/>
    </location>
</feature>
<feature type="zinc finger region" description="C2H2-type 12" evidence="1">
    <location>
        <begin position="729"/>
        <end position="751"/>
    </location>
</feature>
<feature type="zinc finger region" description="C2H2-type 13" evidence="1">
    <location>
        <begin position="757"/>
        <end position="779"/>
    </location>
</feature>
<feature type="zinc finger region" description="C2H2-type 14" evidence="1">
    <location>
        <begin position="785"/>
        <end position="807"/>
    </location>
</feature>
<feature type="zinc finger region" description="C2H2-type 15; degenerate" evidence="1">
    <location>
        <begin position="813"/>
        <end position="835"/>
    </location>
</feature>
<feature type="region of interest" description="Disordered" evidence="3">
    <location>
        <begin position="1"/>
        <end position="82"/>
    </location>
</feature>
<feature type="splice variant" id="VSP_055934" description="In isoform 2." evidence="4">
    <original>QRSVHETQELFPKQDSYAEGVTDRTSNTKLDCSSFRENWDSDYVFGRKL</original>
    <variation>ECRRAWCGKSTARESGAFTKKAASSLIYSRKLYPGSLGLERKLNSGSSK</variation>
    <location>
        <begin position="301"/>
        <end position="349"/>
    </location>
</feature>
<feature type="splice variant" id="VSP_055935" description="In isoform 2." evidence="4">
    <location>
        <begin position="350"/>
        <end position="868"/>
    </location>
</feature>
<feature type="sequence variant" id="VAR_052738" description="In dbSNP:rs34136271.">
    <original>S</original>
    <variation>W</variation>
    <location>
        <position position="141"/>
    </location>
</feature>
<feature type="sequence variant" id="VAR_024190" description="In dbSNP:rs10409531.">
    <original>A</original>
    <variation>V</variation>
    <location>
        <position position="620"/>
    </location>
</feature>
<feature type="sequence conflict" description="In Ref. 4; AAH28416/AAH99903." evidence="5" ref="4">
    <original>R</original>
    <variation>H</variation>
    <location>
        <position position="10"/>
    </location>
</feature>
<feature type="sequence conflict" description="In Ref. 2; BAA92669." evidence="5" ref="2">
    <original>F</original>
    <variation>S</variation>
    <location>
        <position position="383"/>
    </location>
</feature>
<feature type="sequence conflict" description="In Ref. 5." evidence="5" ref="5">
    <location>
        <begin position="766"/>
        <end position="785"/>
    </location>
</feature>
<feature type="turn" evidence="12">
    <location>
        <begin position="423"/>
        <end position="425"/>
    </location>
</feature>
<feature type="helix" evidence="12">
    <location>
        <begin position="432"/>
        <end position="442"/>
    </location>
</feature>
<feature type="strand" evidence="16">
    <location>
        <begin position="479"/>
        <end position="481"/>
    </location>
</feature>
<feature type="strand" evidence="16">
    <location>
        <begin position="485"/>
        <end position="487"/>
    </location>
</feature>
<feature type="helix" evidence="16">
    <location>
        <begin position="488"/>
        <end position="495"/>
    </location>
</feature>
<feature type="turn" evidence="16">
    <location>
        <begin position="496"/>
        <end position="501"/>
    </location>
</feature>
<feature type="turn" evidence="17">
    <location>
        <begin position="508"/>
        <end position="510"/>
    </location>
</feature>
<feature type="strand" evidence="17">
    <location>
        <begin position="514"/>
        <end position="516"/>
    </location>
</feature>
<feature type="helix" evidence="17">
    <location>
        <begin position="517"/>
        <end position="524"/>
    </location>
</feature>
<feature type="turn" evidence="17">
    <location>
        <begin position="525"/>
        <end position="529"/>
    </location>
</feature>
<feature type="strand" evidence="15">
    <location>
        <begin position="532"/>
        <end position="534"/>
    </location>
</feature>
<feature type="strand" evidence="15">
    <location>
        <begin position="536"/>
        <end position="538"/>
    </location>
</feature>
<feature type="strand" evidence="15">
    <location>
        <begin position="541"/>
        <end position="544"/>
    </location>
</feature>
<feature type="helix" evidence="15">
    <location>
        <begin position="545"/>
        <end position="552"/>
    </location>
</feature>
<feature type="turn" evidence="15">
    <location>
        <begin position="553"/>
        <end position="555"/>
    </location>
</feature>
<feature type="strand" evidence="13">
    <location>
        <begin position="558"/>
        <end position="560"/>
    </location>
</feature>
<feature type="turn" evidence="13">
    <location>
        <begin position="564"/>
        <end position="566"/>
    </location>
</feature>
<feature type="strand" evidence="13">
    <location>
        <begin position="571"/>
        <end position="573"/>
    </location>
</feature>
<feature type="helix" evidence="13">
    <location>
        <begin position="574"/>
        <end position="579"/>
    </location>
</feature>
<feature type="helix" evidence="13">
    <location>
        <begin position="580"/>
        <end position="582"/>
    </location>
</feature>
<feature type="strand" evidence="6">
    <location>
        <begin position="588"/>
        <end position="590"/>
    </location>
</feature>
<feature type="strand" evidence="6">
    <location>
        <begin position="592"/>
        <end position="594"/>
    </location>
</feature>
<feature type="strand" evidence="6">
    <location>
        <begin position="597"/>
        <end position="600"/>
    </location>
</feature>
<feature type="helix" evidence="6">
    <location>
        <begin position="601"/>
        <end position="611"/>
    </location>
</feature>
<feature type="strand" evidence="9">
    <location>
        <begin position="616"/>
        <end position="618"/>
    </location>
</feature>
<feature type="strand" evidence="9">
    <location>
        <begin position="620"/>
        <end position="623"/>
    </location>
</feature>
<feature type="strand" evidence="9">
    <location>
        <begin position="625"/>
        <end position="628"/>
    </location>
</feature>
<feature type="helix" evidence="9">
    <location>
        <begin position="629"/>
        <end position="639"/>
    </location>
</feature>
<feature type="strand" evidence="7">
    <location>
        <begin position="644"/>
        <end position="646"/>
    </location>
</feature>
<feature type="strand" evidence="7">
    <location>
        <begin position="648"/>
        <end position="650"/>
    </location>
</feature>
<feature type="strand" evidence="7">
    <location>
        <begin position="653"/>
        <end position="656"/>
    </location>
</feature>
<feature type="helix" evidence="7">
    <location>
        <begin position="657"/>
        <end position="667"/>
    </location>
</feature>
<feature type="strand" evidence="10">
    <location>
        <begin position="668"/>
        <end position="670"/>
    </location>
</feature>
<feature type="strand" evidence="10">
    <location>
        <begin position="676"/>
        <end position="678"/>
    </location>
</feature>
<feature type="helix" evidence="10">
    <location>
        <begin position="685"/>
        <end position="695"/>
    </location>
</feature>
<feature type="strand" evidence="18">
    <location>
        <begin position="700"/>
        <end position="703"/>
    </location>
</feature>
<feature type="turn" evidence="18">
    <location>
        <begin position="704"/>
        <end position="707"/>
    </location>
</feature>
<feature type="helix" evidence="18">
    <location>
        <begin position="713"/>
        <end position="724"/>
    </location>
</feature>
<feature type="strand" evidence="8">
    <location>
        <begin position="726"/>
        <end position="730"/>
    </location>
</feature>
<feature type="strand" evidence="8">
    <location>
        <begin position="732"/>
        <end position="734"/>
    </location>
</feature>
<feature type="strand" evidence="8">
    <location>
        <begin position="737"/>
        <end position="740"/>
    </location>
</feature>
<feature type="helix" evidence="8">
    <location>
        <begin position="741"/>
        <end position="751"/>
    </location>
</feature>
<feature type="strand" evidence="8">
    <location>
        <begin position="752"/>
        <end position="755"/>
    </location>
</feature>
<feature type="strand" evidence="11">
    <location>
        <begin position="756"/>
        <end position="758"/>
    </location>
</feature>
<feature type="strand" evidence="11">
    <location>
        <begin position="760"/>
        <end position="762"/>
    </location>
</feature>
<feature type="strand" evidence="11">
    <location>
        <begin position="765"/>
        <end position="768"/>
    </location>
</feature>
<feature type="helix" evidence="11">
    <location>
        <begin position="769"/>
        <end position="776"/>
    </location>
</feature>
<feature type="helix" evidence="11">
    <location>
        <begin position="777"/>
        <end position="779"/>
    </location>
</feature>
<feature type="strand" evidence="14">
    <location>
        <begin position="788"/>
        <end position="790"/>
    </location>
</feature>
<feature type="helix" evidence="14">
    <location>
        <begin position="797"/>
        <end position="806"/>
    </location>
</feature>
<feature type="sequence conflict" description="In Ref. 4; AAH28416/AAH99903." evidence="5" ref="4">
    <original>S</original>
    <variation>F</variation>
    <location sequence="Q8NHY6-2">
        <position position="324"/>
    </location>
</feature>
<comment type="function">
    <text>May be involved in transcriptional regulation. May have a role in embryonic development.</text>
</comment>
<comment type="subcellular location">
    <subcellularLocation>
        <location evidence="5">Nucleus</location>
    </subcellularLocation>
</comment>
<comment type="alternative products">
    <event type="alternative splicing"/>
    <isoform>
        <id>Q8NHY6-1</id>
        <name>1</name>
        <sequence type="displayed"/>
    </isoform>
    <isoform>
        <id>Q8NHY6-2</id>
        <name>2</name>
        <sequence type="described" ref="VSP_055934 VSP_055935"/>
    </isoform>
</comment>
<comment type="similarity">
    <text evidence="5">Belongs to the krueppel C2H2-type zinc-finger protein family.</text>
</comment>
<comment type="sequence caution" evidence="5">
    <conflict type="erroneous initiation">
        <sequence resource="EMBL-CDS" id="BAA92669"/>
    </conflict>
</comment>
<evidence type="ECO:0000255" key="1">
    <source>
        <dbReference type="PROSITE-ProRule" id="PRU00042"/>
    </source>
</evidence>
<evidence type="ECO:0000255" key="2">
    <source>
        <dbReference type="PROSITE-ProRule" id="PRU00119"/>
    </source>
</evidence>
<evidence type="ECO:0000256" key="3">
    <source>
        <dbReference type="SAM" id="MobiDB-lite"/>
    </source>
</evidence>
<evidence type="ECO:0000303" key="4">
    <source>
    </source>
</evidence>
<evidence type="ECO:0000305" key="5"/>
<evidence type="ECO:0007829" key="6">
    <source>
        <dbReference type="PDB" id="2EM2"/>
    </source>
</evidence>
<evidence type="ECO:0007829" key="7">
    <source>
        <dbReference type="PDB" id="2EM3"/>
    </source>
</evidence>
<evidence type="ECO:0007829" key="8">
    <source>
        <dbReference type="PDB" id="2EM4"/>
    </source>
</evidence>
<evidence type="ECO:0007829" key="9">
    <source>
        <dbReference type="PDB" id="2EMJ"/>
    </source>
</evidence>
<evidence type="ECO:0007829" key="10">
    <source>
        <dbReference type="PDB" id="2EMK"/>
    </source>
</evidence>
<evidence type="ECO:0007829" key="11">
    <source>
        <dbReference type="PDB" id="2EML"/>
    </source>
</evidence>
<evidence type="ECO:0007829" key="12">
    <source>
        <dbReference type="PDB" id="2EN9"/>
    </source>
</evidence>
<evidence type="ECO:0007829" key="13">
    <source>
        <dbReference type="PDB" id="2ENH"/>
    </source>
</evidence>
<evidence type="ECO:0007829" key="14">
    <source>
        <dbReference type="PDB" id="2EOH"/>
    </source>
</evidence>
<evidence type="ECO:0007829" key="15">
    <source>
        <dbReference type="PDB" id="2EP0"/>
    </source>
</evidence>
<evidence type="ECO:0007829" key="16">
    <source>
        <dbReference type="PDB" id="2EPX"/>
    </source>
</evidence>
<evidence type="ECO:0007829" key="17">
    <source>
        <dbReference type="PDB" id="2EPZ"/>
    </source>
</evidence>
<evidence type="ECO:0007829" key="18">
    <source>
        <dbReference type="PDB" id="2YTM"/>
    </source>
</evidence>
<name>ZFP28_HUMAN</name>
<reference key="1">
    <citation type="journal article" date="2002" name="Biochem. Biophys. Res. Commun.">
        <title>Identification and characterization of two novel zinc finger genes, ZNF359 and ZFP28, in human development.</title>
        <authorList>
            <person name="Zhou L."/>
            <person name="Zhu C."/>
            <person name="Luo K."/>
            <person name="Li Y."/>
            <person name="Pi H."/>
            <person name="Yuan W."/>
            <person name="Wang Y."/>
            <person name="Huang C."/>
            <person name="Liu M."/>
            <person name="Wu X."/>
        </authorList>
    </citation>
    <scope>NUCLEOTIDE SEQUENCE [MRNA] (ISOFORM 1)</scope>
</reference>
<reference key="2">
    <citation type="journal article" date="2000" name="DNA Res.">
        <title>Prediction of the coding sequences of unidentified human genes. XVI. The complete sequences of 150 new cDNA clones from brain which code for large proteins in vitro.</title>
        <authorList>
            <person name="Nagase T."/>
            <person name="Kikuno R."/>
            <person name="Ishikawa K."/>
            <person name="Hirosawa M."/>
            <person name="Ohara O."/>
        </authorList>
    </citation>
    <scope>NUCLEOTIDE SEQUENCE [LARGE SCALE MRNA] (ISOFORM 1)</scope>
    <source>
        <tissue>Brain</tissue>
    </source>
</reference>
<reference key="3">
    <citation type="journal article" date="2004" name="Nature">
        <title>The DNA sequence and biology of human chromosome 19.</title>
        <authorList>
            <person name="Grimwood J."/>
            <person name="Gordon L.A."/>
            <person name="Olsen A.S."/>
            <person name="Terry A."/>
            <person name="Schmutz J."/>
            <person name="Lamerdin J.E."/>
            <person name="Hellsten U."/>
            <person name="Goodstein D."/>
            <person name="Couronne O."/>
            <person name="Tran-Gyamfi M."/>
            <person name="Aerts A."/>
            <person name="Altherr M."/>
            <person name="Ashworth L."/>
            <person name="Bajorek E."/>
            <person name="Black S."/>
            <person name="Branscomb E."/>
            <person name="Caenepeel S."/>
            <person name="Carrano A.V."/>
            <person name="Caoile C."/>
            <person name="Chan Y.M."/>
            <person name="Christensen M."/>
            <person name="Cleland C.A."/>
            <person name="Copeland A."/>
            <person name="Dalin E."/>
            <person name="Dehal P."/>
            <person name="Denys M."/>
            <person name="Detter J.C."/>
            <person name="Escobar J."/>
            <person name="Flowers D."/>
            <person name="Fotopulos D."/>
            <person name="Garcia C."/>
            <person name="Georgescu A.M."/>
            <person name="Glavina T."/>
            <person name="Gomez M."/>
            <person name="Gonzales E."/>
            <person name="Groza M."/>
            <person name="Hammon N."/>
            <person name="Hawkins T."/>
            <person name="Haydu L."/>
            <person name="Ho I."/>
            <person name="Huang W."/>
            <person name="Israni S."/>
            <person name="Jett J."/>
            <person name="Kadner K."/>
            <person name="Kimball H."/>
            <person name="Kobayashi A."/>
            <person name="Larionov V."/>
            <person name="Leem S.-H."/>
            <person name="Lopez F."/>
            <person name="Lou Y."/>
            <person name="Lowry S."/>
            <person name="Malfatti S."/>
            <person name="Martinez D."/>
            <person name="McCready P.M."/>
            <person name="Medina C."/>
            <person name="Morgan J."/>
            <person name="Nelson K."/>
            <person name="Nolan M."/>
            <person name="Ovcharenko I."/>
            <person name="Pitluck S."/>
            <person name="Pollard M."/>
            <person name="Popkie A.P."/>
            <person name="Predki P."/>
            <person name="Quan G."/>
            <person name="Ramirez L."/>
            <person name="Rash S."/>
            <person name="Retterer J."/>
            <person name="Rodriguez A."/>
            <person name="Rogers S."/>
            <person name="Salamov A."/>
            <person name="Salazar A."/>
            <person name="She X."/>
            <person name="Smith D."/>
            <person name="Slezak T."/>
            <person name="Solovyev V."/>
            <person name="Thayer N."/>
            <person name="Tice H."/>
            <person name="Tsai M."/>
            <person name="Ustaszewska A."/>
            <person name="Vo N."/>
            <person name="Wagner M."/>
            <person name="Wheeler J."/>
            <person name="Wu K."/>
            <person name="Xie G."/>
            <person name="Yang J."/>
            <person name="Dubchak I."/>
            <person name="Furey T.S."/>
            <person name="DeJong P."/>
            <person name="Dickson M."/>
            <person name="Gordon D."/>
            <person name="Eichler E.E."/>
            <person name="Pennacchio L.A."/>
            <person name="Richardson P."/>
            <person name="Stubbs L."/>
            <person name="Rokhsar D.S."/>
            <person name="Myers R.M."/>
            <person name="Rubin E.M."/>
            <person name="Lucas S.M."/>
        </authorList>
    </citation>
    <scope>NUCLEOTIDE SEQUENCE [LARGE SCALE GENOMIC DNA]</scope>
</reference>
<reference key="4">
    <citation type="journal article" date="2004" name="Genome Res.">
        <title>The status, quality, and expansion of the NIH full-length cDNA project: the Mammalian Gene Collection (MGC).</title>
        <authorList>
            <consortium name="The MGC Project Team"/>
        </authorList>
    </citation>
    <scope>NUCLEOTIDE SEQUENCE [LARGE SCALE MRNA] (ISOFORMS 1 AND 2)</scope>
    <source>
        <tissue>Brain</tissue>
        <tissue>Testis</tissue>
    </source>
</reference>
<reference key="5">
    <citation type="submission" date="2000-01" db="EMBL/GenBank/DDBJ databases">
        <title>Identification of C2H2 zinc finger factor sequences in human heart.</title>
        <authorList>
            <person name="Brand N.J."/>
            <person name="Mullen A.J."/>
            <person name="Barton P.J.R."/>
        </authorList>
    </citation>
    <scope>NUCLEOTIDE SEQUENCE [MRNA] OF 446-868 (ISOFORM 1)</scope>
    <source>
        <tissue>Heart muscle</tissue>
    </source>
</reference>
<reference key="6">
    <citation type="submission" date="2007-10" db="PDB data bank">
        <title>Solution structure of the C2H2 type zinc finger region of human zinc finger protein 28 homolog.</title>
        <authorList>
            <consortium name="RIKEN structural genomics initiative (RSGI)"/>
        </authorList>
    </citation>
    <scope>STRUCTURE BY NMR OF 415-812</scope>
</reference>
<organism>
    <name type="scientific">Homo sapiens</name>
    <name type="common">Human</name>
    <dbReference type="NCBI Taxonomy" id="9606"/>
    <lineage>
        <taxon>Eukaryota</taxon>
        <taxon>Metazoa</taxon>
        <taxon>Chordata</taxon>
        <taxon>Craniata</taxon>
        <taxon>Vertebrata</taxon>
        <taxon>Euteleostomi</taxon>
        <taxon>Mammalia</taxon>
        <taxon>Eutheria</taxon>
        <taxon>Euarchontoglires</taxon>
        <taxon>Primates</taxon>
        <taxon>Haplorrhini</taxon>
        <taxon>Catarrhini</taxon>
        <taxon>Hominidae</taxon>
        <taxon>Homo</taxon>
    </lineage>
</organism>
<dbReference type="EMBL" id="AF507045">
    <property type="protein sequence ID" value="AAM28892.1"/>
    <property type="molecule type" value="mRNA"/>
</dbReference>
<dbReference type="EMBL" id="AB037852">
    <property type="protein sequence ID" value="BAA92669.1"/>
    <property type="status" value="ALT_INIT"/>
    <property type="molecule type" value="mRNA"/>
</dbReference>
<dbReference type="EMBL" id="AC005498">
    <property type="status" value="NOT_ANNOTATED_CDS"/>
    <property type="molecule type" value="Genomic_DNA"/>
</dbReference>
<dbReference type="EMBL" id="BC028416">
    <property type="protein sequence ID" value="AAH28416.1"/>
    <property type="molecule type" value="mRNA"/>
</dbReference>
<dbReference type="EMBL" id="BC099903">
    <property type="protein sequence ID" value="AAH99903.1"/>
    <property type="molecule type" value="mRNA"/>
</dbReference>
<dbReference type="EMBL" id="BC127003">
    <property type="protein sequence ID" value="AAI27004.1"/>
    <property type="molecule type" value="mRNA"/>
</dbReference>
<dbReference type="EMBL" id="AF226995">
    <property type="protein sequence ID" value="AAK28320.1"/>
    <property type="molecule type" value="mRNA"/>
</dbReference>
<dbReference type="CCDS" id="CCDS12946.1">
    <molecule id="Q8NHY6-1"/>
</dbReference>
<dbReference type="CCDS" id="CCDS77363.1">
    <molecule id="Q8NHY6-2"/>
</dbReference>
<dbReference type="RefSeq" id="NP_001295369.1">
    <molecule id="Q8NHY6-2"/>
    <property type="nucleotide sequence ID" value="NM_001308440.2"/>
</dbReference>
<dbReference type="RefSeq" id="NP_065879.1">
    <molecule id="Q8NHY6-1"/>
    <property type="nucleotide sequence ID" value="NM_020828.2"/>
</dbReference>
<dbReference type="PDB" id="2EM2">
    <property type="method" value="NMR"/>
    <property type="chains" value="A=584-616"/>
</dbReference>
<dbReference type="PDB" id="2EM3">
    <property type="method" value="NMR"/>
    <property type="chains" value="A=640-672"/>
</dbReference>
<dbReference type="PDB" id="2EM4">
    <property type="method" value="NMR"/>
    <property type="chains" value="A=724-756"/>
</dbReference>
<dbReference type="PDB" id="2EMJ">
    <property type="method" value="NMR"/>
    <property type="chains" value="A=612-644"/>
</dbReference>
<dbReference type="PDB" id="2EMK">
    <property type="method" value="NMR"/>
    <property type="chains" value="A=668-700"/>
</dbReference>
<dbReference type="PDB" id="2EML">
    <property type="method" value="NMR"/>
    <property type="chains" value="A=752-784"/>
</dbReference>
<dbReference type="PDB" id="2EN9">
    <property type="method" value="NMR"/>
    <property type="chains" value="A=415-447"/>
</dbReference>
<dbReference type="PDB" id="2ENH">
    <property type="method" value="NMR"/>
    <property type="chains" value="A=556-588"/>
</dbReference>
<dbReference type="PDB" id="2EOH">
    <property type="method" value="NMR"/>
    <property type="chains" value="A=780-812"/>
</dbReference>
<dbReference type="PDB" id="2EP0">
    <property type="method" value="NMR"/>
    <property type="chains" value="A=528-560"/>
</dbReference>
<dbReference type="PDB" id="2EPX">
    <property type="method" value="NMR"/>
    <property type="chains" value="A=471-504"/>
</dbReference>
<dbReference type="PDB" id="2EPZ">
    <property type="method" value="NMR"/>
    <property type="chains" value="A=500-532"/>
</dbReference>
<dbReference type="PDB" id="2YTM">
    <property type="method" value="NMR"/>
    <property type="chains" value="A=696-728"/>
</dbReference>
<dbReference type="PDBsum" id="2EM2"/>
<dbReference type="PDBsum" id="2EM3"/>
<dbReference type="PDBsum" id="2EM4"/>
<dbReference type="PDBsum" id="2EMJ"/>
<dbReference type="PDBsum" id="2EMK"/>
<dbReference type="PDBsum" id="2EML"/>
<dbReference type="PDBsum" id="2EN9"/>
<dbReference type="PDBsum" id="2ENH"/>
<dbReference type="PDBsum" id="2EOH"/>
<dbReference type="PDBsum" id="2EP0"/>
<dbReference type="PDBsum" id="2EPX"/>
<dbReference type="PDBsum" id="2EPZ"/>
<dbReference type="PDBsum" id="2YTM"/>
<dbReference type="SMR" id="Q8NHY6"/>
<dbReference type="BioGRID" id="126637">
    <property type="interactions" value="5"/>
</dbReference>
<dbReference type="FunCoup" id="Q8NHY6">
    <property type="interactions" value="98"/>
</dbReference>
<dbReference type="IntAct" id="Q8NHY6">
    <property type="interactions" value="6"/>
</dbReference>
<dbReference type="MINT" id="Q8NHY6"/>
<dbReference type="STRING" id="9606.ENSP00000301318"/>
<dbReference type="GlyGen" id="Q8NHY6">
    <property type="glycosylation" value="3 sites, 1 O-linked glycan (1 site)"/>
</dbReference>
<dbReference type="iPTMnet" id="Q8NHY6"/>
<dbReference type="PhosphoSitePlus" id="Q8NHY6"/>
<dbReference type="SwissPalm" id="Q8NHY6"/>
<dbReference type="BioMuta" id="ZFP28"/>
<dbReference type="DMDM" id="33517131"/>
<dbReference type="jPOST" id="Q8NHY6"/>
<dbReference type="MassIVE" id="Q8NHY6"/>
<dbReference type="PaxDb" id="9606-ENSP00000301318"/>
<dbReference type="PeptideAtlas" id="Q8NHY6"/>
<dbReference type="ProteomicsDB" id="73791">
    <molecule id="Q8NHY6-1"/>
</dbReference>
<dbReference type="Antibodypedia" id="33216">
    <property type="antibodies" value="56 antibodies from 16 providers"/>
</dbReference>
<dbReference type="DNASU" id="140612"/>
<dbReference type="Ensembl" id="ENST00000301318.8">
    <molecule id="Q8NHY6-1"/>
    <property type="protein sequence ID" value="ENSP00000301318.3"/>
    <property type="gene ID" value="ENSG00000196867.8"/>
</dbReference>
<dbReference type="Ensembl" id="ENST00000591844.5">
    <molecule id="Q8NHY6-2"/>
    <property type="protein sequence ID" value="ENSP00000468603.1"/>
    <property type="gene ID" value="ENSG00000196867.8"/>
</dbReference>
<dbReference type="GeneID" id="140612"/>
<dbReference type="KEGG" id="hsa:140612"/>
<dbReference type="MANE-Select" id="ENST00000301318.8">
    <property type="protein sequence ID" value="ENSP00000301318.3"/>
    <property type="RefSeq nucleotide sequence ID" value="NM_020828.2"/>
    <property type="RefSeq protein sequence ID" value="NP_065879.1"/>
</dbReference>
<dbReference type="UCSC" id="uc002qni.4">
    <molecule id="Q8NHY6-1"/>
    <property type="organism name" value="human"/>
</dbReference>
<dbReference type="AGR" id="HGNC:17801"/>
<dbReference type="CTD" id="140612"/>
<dbReference type="DisGeNET" id="140612"/>
<dbReference type="GeneCards" id="ZFP28"/>
<dbReference type="HGNC" id="HGNC:17801">
    <property type="gene designation" value="ZFP28"/>
</dbReference>
<dbReference type="HPA" id="ENSG00000196867">
    <property type="expression patterns" value="Low tissue specificity"/>
</dbReference>
<dbReference type="neXtProt" id="NX_Q8NHY6"/>
<dbReference type="OpenTargets" id="ENSG00000196867"/>
<dbReference type="PharmGKB" id="PA38469"/>
<dbReference type="VEuPathDB" id="HostDB:ENSG00000196867"/>
<dbReference type="eggNOG" id="KOG1721">
    <property type="taxonomic scope" value="Eukaryota"/>
</dbReference>
<dbReference type="GeneTree" id="ENSGT00940000162376"/>
<dbReference type="HOGENOM" id="CLU_002678_17_1_1"/>
<dbReference type="InParanoid" id="Q8NHY6"/>
<dbReference type="OMA" id="FNKSGRW"/>
<dbReference type="OrthoDB" id="9411774at2759"/>
<dbReference type="PAN-GO" id="Q8NHY6">
    <property type="GO annotations" value="4 GO annotations based on evolutionary models"/>
</dbReference>
<dbReference type="PhylomeDB" id="Q8NHY6"/>
<dbReference type="TreeFam" id="TF341817"/>
<dbReference type="PathwayCommons" id="Q8NHY6"/>
<dbReference type="Reactome" id="R-HSA-212436">
    <property type="pathway name" value="Generic Transcription Pathway"/>
</dbReference>
<dbReference type="SignaLink" id="Q8NHY6"/>
<dbReference type="BioGRID-ORCS" id="140612">
    <property type="hits" value="18 hits in 1173 CRISPR screens"/>
</dbReference>
<dbReference type="ChiTaRS" id="ZFP28">
    <property type="organism name" value="human"/>
</dbReference>
<dbReference type="EvolutionaryTrace" id="Q8NHY6"/>
<dbReference type="GenomeRNAi" id="140612"/>
<dbReference type="Pharos" id="Q8NHY6">
    <property type="development level" value="Tbio"/>
</dbReference>
<dbReference type="PRO" id="PR:Q8NHY6"/>
<dbReference type="Proteomes" id="UP000005640">
    <property type="component" value="Chromosome 19"/>
</dbReference>
<dbReference type="RNAct" id="Q8NHY6">
    <property type="molecule type" value="protein"/>
</dbReference>
<dbReference type="Bgee" id="ENSG00000196867">
    <property type="expression patterns" value="Expressed in cortical plate and 127 other cell types or tissues"/>
</dbReference>
<dbReference type="ExpressionAtlas" id="Q8NHY6">
    <property type="expression patterns" value="baseline and differential"/>
</dbReference>
<dbReference type="GO" id="GO:0005634">
    <property type="term" value="C:nucleus"/>
    <property type="evidence" value="ECO:0000318"/>
    <property type="project" value="GO_Central"/>
</dbReference>
<dbReference type="GO" id="GO:0000981">
    <property type="term" value="F:DNA-binding transcription factor activity, RNA polymerase II-specific"/>
    <property type="evidence" value="ECO:0000318"/>
    <property type="project" value="GO_Central"/>
</dbReference>
<dbReference type="GO" id="GO:0000978">
    <property type="term" value="F:RNA polymerase II cis-regulatory region sequence-specific DNA binding"/>
    <property type="evidence" value="ECO:0000318"/>
    <property type="project" value="GO_Central"/>
</dbReference>
<dbReference type="GO" id="GO:0008270">
    <property type="term" value="F:zinc ion binding"/>
    <property type="evidence" value="ECO:0007669"/>
    <property type="project" value="UniProtKB-KW"/>
</dbReference>
<dbReference type="GO" id="GO:0006357">
    <property type="term" value="P:regulation of transcription by RNA polymerase II"/>
    <property type="evidence" value="ECO:0000318"/>
    <property type="project" value="GO_Central"/>
</dbReference>
<dbReference type="CDD" id="cd07765">
    <property type="entry name" value="KRAB_A-box"/>
    <property type="match status" value="1"/>
</dbReference>
<dbReference type="FunFam" id="3.30.160.60:FF:001220">
    <property type="entry name" value="ZFP28 zinc finger protein"/>
    <property type="match status" value="1"/>
</dbReference>
<dbReference type="FunFam" id="3.30.160.60:FF:001502">
    <property type="entry name" value="ZFP28 zinc finger protein"/>
    <property type="match status" value="1"/>
</dbReference>
<dbReference type="FunFam" id="3.30.160.60:FF:002684">
    <property type="entry name" value="ZFP28 zinc finger protein"/>
    <property type="match status" value="1"/>
</dbReference>
<dbReference type="FunFam" id="3.30.160.60:FF:000944">
    <property type="entry name" value="zinc finger protein 232 isoform X1"/>
    <property type="match status" value="1"/>
</dbReference>
<dbReference type="FunFam" id="3.30.160.60:FF:003355">
    <property type="entry name" value="Zinc finger protein 28 homolog"/>
    <property type="match status" value="1"/>
</dbReference>
<dbReference type="FunFam" id="3.30.160.60:FF:002343">
    <property type="entry name" value="Zinc finger protein 33A"/>
    <property type="match status" value="1"/>
</dbReference>
<dbReference type="FunFam" id="3.30.160.60:FF:001498">
    <property type="entry name" value="Zinc finger protein 404"/>
    <property type="match status" value="1"/>
</dbReference>
<dbReference type="FunFam" id="3.30.160.60:FF:000519">
    <property type="entry name" value="Zinc finger protein 470"/>
    <property type="match status" value="1"/>
</dbReference>
<dbReference type="FunFam" id="3.30.160.60:FF:002090">
    <property type="entry name" value="Zinc finger protein 473"/>
    <property type="match status" value="2"/>
</dbReference>
<dbReference type="FunFam" id="3.30.160.60:FF:000052">
    <property type="entry name" value="zinc finger protein 546 isoform X1"/>
    <property type="match status" value="1"/>
</dbReference>
<dbReference type="FunFam" id="3.30.160.60:FF:000281">
    <property type="entry name" value="Zinc finger protein 558 isoform X1"/>
    <property type="match status" value="1"/>
</dbReference>
<dbReference type="FunFam" id="3.30.160.60:FF:000070">
    <property type="entry name" value="zinc finger protein 689 isoform X1"/>
    <property type="match status" value="2"/>
</dbReference>
<dbReference type="FunFam" id="3.30.160.60:FF:000710">
    <property type="entry name" value="Zinc finger protein 768"/>
    <property type="match status" value="1"/>
</dbReference>
<dbReference type="Gene3D" id="6.10.140.140">
    <property type="match status" value="1"/>
</dbReference>
<dbReference type="Gene3D" id="3.30.160.60">
    <property type="entry name" value="Classic Zinc Finger"/>
    <property type="match status" value="15"/>
</dbReference>
<dbReference type="InterPro" id="IPR050752">
    <property type="entry name" value="C2H2-ZF_domain"/>
</dbReference>
<dbReference type="InterPro" id="IPR001909">
    <property type="entry name" value="KRAB"/>
</dbReference>
<dbReference type="InterPro" id="IPR036051">
    <property type="entry name" value="KRAB_dom_sf"/>
</dbReference>
<dbReference type="InterPro" id="IPR036236">
    <property type="entry name" value="Znf_C2H2_sf"/>
</dbReference>
<dbReference type="InterPro" id="IPR013087">
    <property type="entry name" value="Znf_C2H2_type"/>
</dbReference>
<dbReference type="PANTHER" id="PTHR24384">
    <property type="entry name" value="FINGER PUTATIVE TRANSCRIPTION FACTOR FAMILY-RELATED"/>
    <property type="match status" value="1"/>
</dbReference>
<dbReference type="PANTHER" id="PTHR24384:SF246">
    <property type="entry name" value="GENE, 19965-RELATED"/>
    <property type="match status" value="1"/>
</dbReference>
<dbReference type="Pfam" id="PF01352">
    <property type="entry name" value="KRAB"/>
    <property type="match status" value="2"/>
</dbReference>
<dbReference type="Pfam" id="PF00096">
    <property type="entry name" value="zf-C2H2"/>
    <property type="match status" value="13"/>
</dbReference>
<dbReference type="Pfam" id="PF13912">
    <property type="entry name" value="zf-C2H2_6"/>
    <property type="match status" value="1"/>
</dbReference>
<dbReference type="SMART" id="SM00349">
    <property type="entry name" value="KRAB"/>
    <property type="match status" value="2"/>
</dbReference>
<dbReference type="SMART" id="SM00355">
    <property type="entry name" value="ZnF_C2H2"/>
    <property type="match status" value="14"/>
</dbReference>
<dbReference type="SUPFAM" id="SSF57667">
    <property type="entry name" value="beta-beta-alpha zinc fingers"/>
    <property type="match status" value="8"/>
</dbReference>
<dbReference type="SUPFAM" id="SSF109640">
    <property type="entry name" value="KRAB domain (Kruppel-associated box)"/>
    <property type="match status" value="2"/>
</dbReference>
<dbReference type="PROSITE" id="PS50805">
    <property type="entry name" value="KRAB"/>
    <property type="match status" value="2"/>
</dbReference>
<dbReference type="PROSITE" id="PS00028">
    <property type="entry name" value="ZINC_FINGER_C2H2_1"/>
    <property type="match status" value="14"/>
</dbReference>
<dbReference type="PROSITE" id="PS50157">
    <property type="entry name" value="ZINC_FINGER_C2H2_2"/>
    <property type="match status" value="15"/>
</dbReference>
<accession>Q8NHY6</accession>
<accession>A0JNV6</accession>
<accession>K7ES88</accession>
<accession>Q8NHU8</accession>
<accession>Q9BY30</accession>
<accession>Q9P2B6</accession>
<proteinExistence type="evidence at protein level"/>
<sequence length="868" mass="98705">MRGAASASVREPTPLPGRGAPRTKPRAGRGPTVGTPATLALPARGRPRSRNGLASKGQRGAAPTGPGHRALPSRDTALPQERNKKLEAVGTGIEPKAMSQGLVTFGDVAVDFSQEEWEWLNPIQRNLYRKVMLENYRNLASLGLCVSKPDVISSLEQGKEPWTVKRKMTRAWCPDLKAVWKIKELPLKKDFCEGKLSQAVITERLTSYNLEYSLLGEHWDYDALFETQPGLVTIKNLAVDFRQQLHPAQKNFCKNGIWENNSDLGSAGHCVAKPDLVSLLEQEKEPWMVKRELTGSLFSGQRSVHETQELFPKQDSYAEGVTDRTSNTKLDCSSFRENWDSDYVFGRKLAVGQETQFRQEPITHNKTLSKERERTYNKSGRWFYLDDSEEKVHNRDSIKNFQKSSVVIKQTGIYAGKKLFKCNECKKTFTQSSSLTVHQRIHTGEKPYKCNECGKAFSDGSSFARHQRCHTGKKPYECIECGKAFIQNTSLIRHWRYYHTGEKPFDCIDCGKAFSDHIGLNQHRRIHTGEKPYKCDVCHKSFRYGSSLTVHQRIHTGEKPYECDVCRKAFSHHASLTQHQRVHSGEKPFKCKECGKAFRQNIHLASHLRIHTGEKPFECAECGKSFSISSQLATHQRIHTGEKPYECKVCSKAFTQKAHLAQHQKTHTGEKPYECKECGKAFSQTTHLIQHQRVHTGEKPYKCMECGKAFGDNSSCTQHQRLHTGQRPYECIECGKAFKTKSSLICHRRSHTGEKPYECSVCGKAFSHRQSLSVHQRIHSGKKPYECKECRKTFIQIGHLNQHKRVHTGERSYNYKKSRKVFRQTAHLAHHQRIHTGESSTCPSLPSTSNPVDLFPKFLWNPSSLPSP</sequence>
<keyword id="KW-0002">3D-structure</keyword>
<keyword id="KW-0025">Alternative splicing</keyword>
<keyword id="KW-0238">DNA-binding</keyword>
<keyword id="KW-0479">Metal-binding</keyword>
<keyword id="KW-0539">Nucleus</keyword>
<keyword id="KW-1267">Proteomics identification</keyword>
<keyword id="KW-1185">Reference proteome</keyword>
<keyword id="KW-0677">Repeat</keyword>
<keyword id="KW-0804">Transcription</keyword>
<keyword id="KW-0805">Transcription regulation</keyword>
<keyword id="KW-0862">Zinc</keyword>
<keyword id="KW-0863">Zinc-finger</keyword>
<protein>
    <recommendedName>
        <fullName>Zinc finger protein 28 homolog</fullName>
        <shortName>Zfp-28</shortName>
    </recommendedName>
    <alternativeName>
        <fullName>Krueppel-like zinc finger factor X6</fullName>
    </alternativeName>
</protein>
<gene>
    <name type="primary">ZFP28</name>
    <name type="synonym">KIAA1431</name>
</gene>